<accession>Q9LCQ7</accession>
<gene>
    <name type="primary">pvaB</name>
</gene>
<feature type="signal peptide" evidence="2">
    <location>
        <begin position="1"/>
        <end position="23"/>
    </location>
</feature>
<feature type="chain" id="PRO_5000049141" description="Oxidized polyvinyl alcohol hydrolase">
    <location>
        <begin position="24"/>
        <end position="379"/>
    </location>
</feature>
<feature type="active site" description="Charge relay system" evidence="1">
    <location>
        <position position="203"/>
    </location>
</feature>
<feature type="active site" description="Charge relay system" evidence="1">
    <location>
        <position position="309"/>
    </location>
</feature>
<feature type="helix" evidence="5">
    <location>
        <begin position="54"/>
        <end position="56"/>
    </location>
</feature>
<feature type="strand" evidence="6">
    <location>
        <begin position="61"/>
        <end position="69"/>
    </location>
</feature>
<feature type="strand" evidence="6">
    <location>
        <begin position="72"/>
        <end position="79"/>
    </location>
</feature>
<feature type="strand" evidence="6">
    <location>
        <begin position="86"/>
        <end position="94"/>
    </location>
</feature>
<feature type="strand" evidence="6">
    <location>
        <begin position="97"/>
        <end position="99"/>
    </location>
</feature>
<feature type="helix" evidence="6">
    <location>
        <begin position="101"/>
        <end position="106"/>
    </location>
</feature>
<feature type="helix" evidence="6">
    <location>
        <begin position="108"/>
        <end position="110"/>
    </location>
</feature>
<feature type="helix" evidence="6">
    <location>
        <begin position="113"/>
        <end position="119"/>
    </location>
</feature>
<feature type="strand" evidence="6">
    <location>
        <begin position="122"/>
        <end position="126"/>
    </location>
</feature>
<feature type="helix" evidence="6">
    <location>
        <begin position="129"/>
        <end position="131"/>
    </location>
</feature>
<feature type="turn" evidence="6">
    <location>
        <begin position="140"/>
        <end position="142"/>
    </location>
</feature>
<feature type="strand" evidence="6">
    <location>
        <begin position="143"/>
        <end position="145"/>
    </location>
</feature>
<feature type="strand" evidence="6">
    <location>
        <begin position="150"/>
        <end position="152"/>
    </location>
</feature>
<feature type="turn" evidence="7">
    <location>
        <begin position="153"/>
        <end position="156"/>
    </location>
</feature>
<feature type="helix" evidence="6">
    <location>
        <begin position="163"/>
        <end position="169"/>
    </location>
</feature>
<feature type="helix" evidence="6">
    <location>
        <begin position="174"/>
        <end position="186"/>
    </location>
</feature>
<feature type="turn" evidence="6">
    <location>
        <begin position="187"/>
        <end position="189"/>
    </location>
</feature>
<feature type="strand" evidence="6">
    <location>
        <begin position="192"/>
        <end position="202"/>
    </location>
</feature>
<feature type="helix" evidence="6">
    <location>
        <begin position="204"/>
        <end position="215"/>
    </location>
</feature>
<feature type="turn" evidence="6">
    <location>
        <begin position="217"/>
        <end position="219"/>
    </location>
</feature>
<feature type="strand" evidence="6">
    <location>
        <begin position="221"/>
        <end position="227"/>
    </location>
</feature>
<feature type="helix" evidence="6">
    <location>
        <begin position="242"/>
        <end position="251"/>
    </location>
</feature>
<feature type="strand" evidence="6">
    <location>
        <begin position="272"/>
        <end position="279"/>
    </location>
</feature>
<feature type="strand" evidence="6">
    <location>
        <begin position="285"/>
        <end position="289"/>
    </location>
</feature>
<feature type="strand" evidence="6">
    <location>
        <begin position="295"/>
        <end position="300"/>
    </location>
</feature>
<feature type="helix" evidence="6">
    <location>
        <begin position="301"/>
        <end position="314"/>
    </location>
</feature>
<feature type="strand" evidence="6">
    <location>
        <begin position="318"/>
        <end position="324"/>
    </location>
</feature>
<feature type="strand" evidence="6">
    <location>
        <begin position="329"/>
        <end position="331"/>
    </location>
</feature>
<feature type="helix" evidence="6">
    <location>
        <begin position="336"/>
        <end position="348"/>
    </location>
</feature>
<feature type="helix" evidence="6">
    <location>
        <begin position="356"/>
        <end position="358"/>
    </location>
</feature>
<feature type="strand" evidence="6">
    <location>
        <begin position="369"/>
        <end position="374"/>
    </location>
</feature>
<feature type="strand" evidence="6">
    <location>
        <begin position="377"/>
        <end position="379"/>
    </location>
</feature>
<reference key="1">
    <citation type="journal article" date="2000" name="Microbiology">
        <title>The gene pvaB encodes oxidized polyvinyl alcohol hydrolase of Pseudomonas sp. strain VM15C and forms an operon with the polyvinyl alcohol dehydrogenase gene pvaA.</title>
        <authorList>
            <person name="Shimao M."/>
            <person name="Tamogami T."/>
            <person name="Kishida S."/>
            <person name="Harayama S."/>
        </authorList>
    </citation>
    <scope>NUCLEOTIDE SEQUENCE [GENOMIC DNA]</scope>
    <scope>FUNCTION</scope>
    <scope>CATALYTIC ACTIVITY</scope>
    <source>
        <strain>VM15C</strain>
    </source>
</reference>
<comment type="function">
    <text evidence="3">Catalyzes the hydrolysis of 4,6-nonanedione, a beta-diketone compound. Also mediates hydrolysis of oxidized polyvinyl alcohol (PVA) in the second step in the degradation of polyvinyl alcohol. Not active toward the monoketone structure.</text>
</comment>
<comment type="catalytic activity">
    <reaction evidence="3">
        <text>nonane-4,6-dione + H2O = pentan-2-one + butanoate + H(+)</text>
        <dbReference type="Rhea" id="RHEA:11908"/>
        <dbReference type="ChEBI" id="CHEBI:15377"/>
        <dbReference type="ChEBI" id="CHEBI:15378"/>
        <dbReference type="ChEBI" id="CHEBI:16111"/>
        <dbReference type="ChEBI" id="CHEBI:16472"/>
        <dbReference type="ChEBI" id="CHEBI:17968"/>
        <dbReference type="EC" id="3.7.1.7"/>
    </reaction>
</comment>
<comment type="subunit">
    <text evidence="1">Monomer.</text>
</comment>
<comment type="similarity">
    <text evidence="4">Belongs to the peptidase S9A family.</text>
</comment>
<name>OPH_PSESP</name>
<keyword id="KW-0002">3D-structure</keyword>
<keyword id="KW-0378">Hydrolase</keyword>
<keyword id="KW-0732">Signal</keyword>
<protein>
    <recommendedName>
        <fullName>Oxidized polyvinyl alcohol hydrolase</fullName>
        <shortName>OPH</shortName>
        <shortName>Oxidized PVA hydrolase</shortName>
        <ecNumber>3.7.1.7</ecNumber>
    </recommendedName>
    <alternativeName>
        <fullName>Beta-diketone hydrolase</fullName>
    </alternativeName>
</protein>
<sequence length="379" mass="40613">MNQSLGVLRLTRGVIALALASVASGCSSTGADRTAATPAAANPAATEPVKWECPAGYEVKEGLNVDFPHKGMKRAFIVYPAKNVSGPAPVWVPMTGSVESTNDNLTVARSGANSILADHGYTVIAPVRACANQDPNIRGERCNGPGSNGWNWNPWFEGRAADPSGEHWKNDEGPDSSFFVAMVQCVGTKYKLDARRLFLGGISSGGTMTNRALLFRSNFWAGGLPISGEWYVTSDDGTPLSFDDARAAVAAAPTKIHQGRVGPYPLPAKVGPLIVMTVWGGEKDLWNCTRPDGSRFLCADYRPSTQAGSNFFSAQPDVVHVACSSTHGHMWPQLNTQEFNRWALDTLASHPKGSDPRSFKLTQPPEGYTCHVGPFTGLY</sequence>
<organism>
    <name type="scientific">Pseudomonas sp</name>
    <dbReference type="NCBI Taxonomy" id="306"/>
    <lineage>
        <taxon>Bacteria</taxon>
        <taxon>Pseudomonadati</taxon>
        <taxon>Pseudomonadota</taxon>
        <taxon>Gammaproteobacteria</taxon>
        <taxon>Pseudomonadales</taxon>
        <taxon>Pseudomonadaceae</taxon>
        <taxon>Pseudomonas</taxon>
    </lineage>
</organism>
<dbReference type="EC" id="3.7.1.7"/>
<dbReference type="EMBL" id="AB008494">
    <property type="protein sequence ID" value="BAA94192.1"/>
    <property type="molecule type" value="Genomic_DNA"/>
</dbReference>
<dbReference type="PDB" id="3WL5">
    <property type="method" value="X-ray"/>
    <property type="resolution" value="1.60 A"/>
    <property type="chains" value="A=30-379"/>
</dbReference>
<dbReference type="PDB" id="3WL6">
    <property type="method" value="X-ray"/>
    <property type="resolution" value="1.60 A"/>
    <property type="chains" value="A/B=30-379"/>
</dbReference>
<dbReference type="PDB" id="3WL7">
    <property type="method" value="X-ray"/>
    <property type="resolution" value="1.67 A"/>
    <property type="chains" value="A=30-379"/>
</dbReference>
<dbReference type="PDB" id="3WL8">
    <property type="method" value="X-ray"/>
    <property type="resolution" value="1.60 A"/>
    <property type="chains" value="A=30-379"/>
</dbReference>
<dbReference type="PDB" id="3WWC">
    <property type="method" value="X-ray"/>
    <property type="resolution" value="1.49 A"/>
    <property type="chains" value="A=30-379"/>
</dbReference>
<dbReference type="PDB" id="3WWD">
    <property type="method" value="X-ray"/>
    <property type="resolution" value="1.65 A"/>
    <property type="chains" value="A=30-379"/>
</dbReference>
<dbReference type="PDB" id="3WWE">
    <property type="method" value="X-ray"/>
    <property type="resolution" value="2.10 A"/>
    <property type="chains" value="A=30-379"/>
</dbReference>
<dbReference type="PDBsum" id="3WL5"/>
<dbReference type="PDBsum" id="3WL6"/>
<dbReference type="PDBsum" id="3WL7"/>
<dbReference type="PDBsum" id="3WL8"/>
<dbReference type="PDBsum" id="3WWC"/>
<dbReference type="PDBsum" id="3WWD"/>
<dbReference type="PDBsum" id="3WWE"/>
<dbReference type="SMR" id="Q9LCQ7"/>
<dbReference type="ESTHER" id="psesp-OPH">
    <property type="family name" value="AlphaBeta_hydrolase"/>
</dbReference>
<dbReference type="BRENDA" id="3.7.1.7">
    <property type="organism ID" value="5085"/>
</dbReference>
<dbReference type="EvolutionaryTrace" id="Q9LCQ7"/>
<dbReference type="GO" id="GO:0047699">
    <property type="term" value="F:beta-diketone hydrolase activity"/>
    <property type="evidence" value="ECO:0007669"/>
    <property type="project" value="UniProtKB-EC"/>
</dbReference>
<dbReference type="Gene3D" id="3.40.50.1820">
    <property type="entry name" value="alpha/beta hydrolase"/>
    <property type="match status" value="1"/>
</dbReference>
<dbReference type="InterPro" id="IPR029058">
    <property type="entry name" value="AB_hydrolase_fold"/>
</dbReference>
<dbReference type="InterPro" id="IPR050955">
    <property type="entry name" value="Plant_Biomass_Hydrol_Est"/>
</dbReference>
<dbReference type="PANTHER" id="PTHR43037:SF5">
    <property type="entry name" value="FERULOYL ESTERASE"/>
    <property type="match status" value="1"/>
</dbReference>
<dbReference type="PANTHER" id="PTHR43037">
    <property type="entry name" value="UNNAMED PRODUCT-RELATED"/>
    <property type="match status" value="1"/>
</dbReference>
<dbReference type="SUPFAM" id="SSF53474">
    <property type="entry name" value="alpha/beta-Hydrolases"/>
    <property type="match status" value="1"/>
</dbReference>
<evidence type="ECO:0000250" key="1"/>
<evidence type="ECO:0000255" key="2"/>
<evidence type="ECO:0000269" key="3">
    <source>
    </source>
</evidence>
<evidence type="ECO:0000305" key="4"/>
<evidence type="ECO:0007829" key="5">
    <source>
        <dbReference type="PDB" id="3WL6"/>
    </source>
</evidence>
<evidence type="ECO:0007829" key="6">
    <source>
        <dbReference type="PDB" id="3WWC"/>
    </source>
</evidence>
<evidence type="ECO:0007829" key="7">
    <source>
        <dbReference type="PDB" id="3WWE"/>
    </source>
</evidence>
<proteinExistence type="evidence at protein level"/>